<organism>
    <name type="scientific">Shewanella sp. (strain ANA-3)</name>
    <dbReference type="NCBI Taxonomy" id="94122"/>
    <lineage>
        <taxon>Bacteria</taxon>
        <taxon>Pseudomonadati</taxon>
        <taxon>Pseudomonadota</taxon>
        <taxon>Gammaproteobacteria</taxon>
        <taxon>Alteromonadales</taxon>
        <taxon>Shewanellaceae</taxon>
        <taxon>Shewanella</taxon>
    </lineage>
</organism>
<feature type="chain" id="PRO_1000002142" description="SsrA-binding protein">
    <location>
        <begin position="1"/>
        <end position="163"/>
    </location>
</feature>
<accession>A0KZF9</accession>
<dbReference type="EMBL" id="CP000469">
    <property type="protein sequence ID" value="ABK49178.1"/>
    <property type="molecule type" value="Genomic_DNA"/>
</dbReference>
<dbReference type="RefSeq" id="WP_011623527.1">
    <property type="nucleotide sequence ID" value="NC_008577.1"/>
</dbReference>
<dbReference type="SMR" id="A0KZF9"/>
<dbReference type="STRING" id="94122.Shewana3_2952"/>
<dbReference type="GeneID" id="94728886"/>
<dbReference type="KEGG" id="shn:Shewana3_2952"/>
<dbReference type="eggNOG" id="COG0691">
    <property type="taxonomic scope" value="Bacteria"/>
</dbReference>
<dbReference type="HOGENOM" id="CLU_108953_3_0_6"/>
<dbReference type="OrthoDB" id="9805462at2"/>
<dbReference type="Proteomes" id="UP000002589">
    <property type="component" value="Chromosome"/>
</dbReference>
<dbReference type="GO" id="GO:0005829">
    <property type="term" value="C:cytosol"/>
    <property type="evidence" value="ECO:0007669"/>
    <property type="project" value="TreeGrafter"/>
</dbReference>
<dbReference type="GO" id="GO:0003723">
    <property type="term" value="F:RNA binding"/>
    <property type="evidence" value="ECO:0007669"/>
    <property type="project" value="UniProtKB-UniRule"/>
</dbReference>
<dbReference type="GO" id="GO:0070929">
    <property type="term" value="P:trans-translation"/>
    <property type="evidence" value="ECO:0007669"/>
    <property type="project" value="UniProtKB-UniRule"/>
</dbReference>
<dbReference type="CDD" id="cd09294">
    <property type="entry name" value="SmpB"/>
    <property type="match status" value="1"/>
</dbReference>
<dbReference type="Gene3D" id="2.40.280.10">
    <property type="match status" value="1"/>
</dbReference>
<dbReference type="HAMAP" id="MF_00023">
    <property type="entry name" value="SmpB"/>
    <property type="match status" value="1"/>
</dbReference>
<dbReference type="InterPro" id="IPR023620">
    <property type="entry name" value="SmpB"/>
</dbReference>
<dbReference type="InterPro" id="IPR000037">
    <property type="entry name" value="SsrA-bd_prot"/>
</dbReference>
<dbReference type="InterPro" id="IPR020081">
    <property type="entry name" value="SsrA-bd_prot_CS"/>
</dbReference>
<dbReference type="NCBIfam" id="NF003843">
    <property type="entry name" value="PRK05422.1"/>
    <property type="match status" value="1"/>
</dbReference>
<dbReference type="NCBIfam" id="TIGR00086">
    <property type="entry name" value="smpB"/>
    <property type="match status" value="1"/>
</dbReference>
<dbReference type="PANTHER" id="PTHR30308:SF2">
    <property type="entry name" value="SSRA-BINDING PROTEIN"/>
    <property type="match status" value="1"/>
</dbReference>
<dbReference type="PANTHER" id="PTHR30308">
    <property type="entry name" value="TMRNA-BINDING COMPONENT OF TRANS-TRANSLATION TAGGING COMPLEX"/>
    <property type="match status" value="1"/>
</dbReference>
<dbReference type="Pfam" id="PF01668">
    <property type="entry name" value="SmpB"/>
    <property type="match status" value="1"/>
</dbReference>
<dbReference type="SUPFAM" id="SSF74982">
    <property type="entry name" value="Small protein B (SmpB)"/>
    <property type="match status" value="1"/>
</dbReference>
<dbReference type="PROSITE" id="PS01317">
    <property type="entry name" value="SSRP"/>
    <property type="match status" value="1"/>
</dbReference>
<proteinExistence type="inferred from homology"/>
<reference key="1">
    <citation type="submission" date="2006-09" db="EMBL/GenBank/DDBJ databases">
        <title>Complete sequence of chromosome 1 of Shewanella sp. ANA-3.</title>
        <authorList>
            <person name="Copeland A."/>
            <person name="Lucas S."/>
            <person name="Lapidus A."/>
            <person name="Barry K."/>
            <person name="Detter J.C."/>
            <person name="Glavina del Rio T."/>
            <person name="Hammon N."/>
            <person name="Israni S."/>
            <person name="Dalin E."/>
            <person name="Tice H."/>
            <person name="Pitluck S."/>
            <person name="Chertkov O."/>
            <person name="Brettin T."/>
            <person name="Bruce D."/>
            <person name="Han C."/>
            <person name="Tapia R."/>
            <person name="Gilna P."/>
            <person name="Schmutz J."/>
            <person name="Larimer F."/>
            <person name="Land M."/>
            <person name="Hauser L."/>
            <person name="Kyrpides N."/>
            <person name="Kim E."/>
            <person name="Newman D."/>
            <person name="Salticov C."/>
            <person name="Konstantinidis K."/>
            <person name="Klappenback J."/>
            <person name="Tiedje J."/>
            <person name="Richardson P."/>
        </authorList>
    </citation>
    <scope>NUCLEOTIDE SEQUENCE [LARGE SCALE GENOMIC DNA]</scope>
    <source>
        <strain>ANA-3</strain>
    </source>
</reference>
<sequence>MVKKNSKKAAPATIARNKRATFEYRFEEKMEAGISLMGWEVKSIRMGKVNLSDCYVFLKNGEAFMHGCTIIPLNTASTHVVCDPIRLKKLLLSRKELDKLAGLVERQGYSIIPISMYWRKGAWVKVEIGLGKGKKDHDKREDTKAREWEVEKARVMKKEKTRG</sequence>
<gene>
    <name evidence="1" type="primary">smpB</name>
    <name type="ordered locus">Shewana3_2952</name>
</gene>
<comment type="function">
    <text evidence="1">Required for rescue of stalled ribosomes mediated by trans-translation. Binds to transfer-messenger RNA (tmRNA), required for stable association of tmRNA with ribosomes. tmRNA and SmpB together mimic tRNA shape, replacing the anticodon stem-loop with SmpB. tmRNA is encoded by the ssrA gene; the 2 termini fold to resemble tRNA(Ala) and it encodes a 'tag peptide', a short internal open reading frame. During trans-translation Ala-aminoacylated tmRNA acts like a tRNA, entering the A-site of stalled ribosomes, displacing the stalled mRNA. The ribosome then switches to translate the ORF on the tmRNA; the nascent peptide is terminated with the 'tag peptide' encoded by the tmRNA and targeted for degradation. The ribosome is freed to recommence translation, which seems to be the essential function of trans-translation.</text>
</comment>
<comment type="subcellular location">
    <subcellularLocation>
        <location evidence="1">Cytoplasm</location>
    </subcellularLocation>
    <text evidence="1">The tmRNA-SmpB complex associates with stalled 70S ribosomes.</text>
</comment>
<comment type="similarity">
    <text evidence="1">Belongs to the SmpB family.</text>
</comment>
<evidence type="ECO:0000255" key="1">
    <source>
        <dbReference type="HAMAP-Rule" id="MF_00023"/>
    </source>
</evidence>
<name>SSRP_SHESA</name>
<keyword id="KW-0963">Cytoplasm</keyword>
<keyword id="KW-0694">RNA-binding</keyword>
<protein>
    <recommendedName>
        <fullName evidence="1">SsrA-binding protein</fullName>
    </recommendedName>
    <alternativeName>
        <fullName evidence="1">Small protein B</fullName>
    </alternativeName>
</protein>